<dbReference type="EC" id="3.4.21.92" evidence="1"/>
<dbReference type="EMBL" id="CP000471">
    <property type="protein sequence ID" value="ABK46127.1"/>
    <property type="molecule type" value="Genomic_DNA"/>
</dbReference>
<dbReference type="RefSeq" id="WP_011715180.1">
    <property type="nucleotide sequence ID" value="NC_008576.1"/>
</dbReference>
<dbReference type="SMR" id="A0LDT4"/>
<dbReference type="STRING" id="156889.Mmc1_3642"/>
<dbReference type="MEROPS" id="S14.001"/>
<dbReference type="KEGG" id="mgm:Mmc1_3642"/>
<dbReference type="eggNOG" id="COG0740">
    <property type="taxonomic scope" value="Bacteria"/>
</dbReference>
<dbReference type="HOGENOM" id="CLU_058707_3_2_5"/>
<dbReference type="OrthoDB" id="9802800at2"/>
<dbReference type="Proteomes" id="UP000002586">
    <property type="component" value="Chromosome"/>
</dbReference>
<dbReference type="GO" id="GO:0005737">
    <property type="term" value="C:cytoplasm"/>
    <property type="evidence" value="ECO:0007669"/>
    <property type="project" value="UniProtKB-SubCell"/>
</dbReference>
<dbReference type="GO" id="GO:0009368">
    <property type="term" value="C:endopeptidase Clp complex"/>
    <property type="evidence" value="ECO:0007669"/>
    <property type="project" value="TreeGrafter"/>
</dbReference>
<dbReference type="GO" id="GO:0004176">
    <property type="term" value="F:ATP-dependent peptidase activity"/>
    <property type="evidence" value="ECO:0007669"/>
    <property type="project" value="InterPro"/>
</dbReference>
<dbReference type="GO" id="GO:0051117">
    <property type="term" value="F:ATPase binding"/>
    <property type="evidence" value="ECO:0007669"/>
    <property type="project" value="TreeGrafter"/>
</dbReference>
<dbReference type="GO" id="GO:0004252">
    <property type="term" value="F:serine-type endopeptidase activity"/>
    <property type="evidence" value="ECO:0007669"/>
    <property type="project" value="UniProtKB-UniRule"/>
</dbReference>
<dbReference type="GO" id="GO:0006515">
    <property type="term" value="P:protein quality control for misfolded or incompletely synthesized proteins"/>
    <property type="evidence" value="ECO:0007669"/>
    <property type="project" value="TreeGrafter"/>
</dbReference>
<dbReference type="CDD" id="cd07017">
    <property type="entry name" value="S14_ClpP_2"/>
    <property type="match status" value="1"/>
</dbReference>
<dbReference type="FunFam" id="3.90.226.10:FF:000001">
    <property type="entry name" value="ATP-dependent Clp protease proteolytic subunit"/>
    <property type="match status" value="1"/>
</dbReference>
<dbReference type="Gene3D" id="3.90.226.10">
    <property type="entry name" value="2-enoyl-CoA Hydratase, Chain A, domain 1"/>
    <property type="match status" value="1"/>
</dbReference>
<dbReference type="HAMAP" id="MF_00444">
    <property type="entry name" value="ClpP"/>
    <property type="match status" value="1"/>
</dbReference>
<dbReference type="InterPro" id="IPR001907">
    <property type="entry name" value="ClpP"/>
</dbReference>
<dbReference type="InterPro" id="IPR029045">
    <property type="entry name" value="ClpP/crotonase-like_dom_sf"/>
</dbReference>
<dbReference type="InterPro" id="IPR023562">
    <property type="entry name" value="ClpP/TepA"/>
</dbReference>
<dbReference type="InterPro" id="IPR033135">
    <property type="entry name" value="ClpP_His_AS"/>
</dbReference>
<dbReference type="InterPro" id="IPR018215">
    <property type="entry name" value="ClpP_Ser_AS"/>
</dbReference>
<dbReference type="NCBIfam" id="TIGR00493">
    <property type="entry name" value="clpP"/>
    <property type="match status" value="1"/>
</dbReference>
<dbReference type="NCBIfam" id="NF001368">
    <property type="entry name" value="PRK00277.1"/>
    <property type="match status" value="1"/>
</dbReference>
<dbReference type="NCBIfam" id="NF009205">
    <property type="entry name" value="PRK12553.1"/>
    <property type="match status" value="1"/>
</dbReference>
<dbReference type="PANTHER" id="PTHR10381">
    <property type="entry name" value="ATP-DEPENDENT CLP PROTEASE PROTEOLYTIC SUBUNIT"/>
    <property type="match status" value="1"/>
</dbReference>
<dbReference type="PANTHER" id="PTHR10381:SF70">
    <property type="entry name" value="ATP-DEPENDENT CLP PROTEASE PROTEOLYTIC SUBUNIT"/>
    <property type="match status" value="1"/>
</dbReference>
<dbReference type="Pfam" id="PF00574">
    <property type="entry name" value="CLP_protease"/>
    <property type="match status" value="1"/>
</dbReference>
<dbReference type="PRINTS" id="PR00127">
    <property type="entry name" value="CLPPROTEASEP"/>
</dbReference>
<dbReference type="SUPFAM" id="SSF52096">
    <property type="entry name" value="ClpP/crotonase"/>
    <property type="match status" value="1"/>
</dbReference>
<dbReference type="PROSITE" id="PS00382">
    <property type="entry name" value="CLP_PROTEASE_HIS"/>
    <property type="match status" value="1"/>
</dbReference>
<dbReference type="PROSITE" id="PS00381">
    <property type="entry name" value="CLP_PROTEASE_SER"/>
    <property type="match status" value="1"/>
</dbReference>
<protein>
    <recommendedName>
        <fullName evidence="1">ATP-dependent Clp protease proteolytic subunit</fullName>
        <ecNumber evidence="1">3.4.21.92</ecNumber>
    </recommendedName>
    <alternativeName>
        <fullName evidence="1">Endopeptidase Clp</fullName>
    </alternativeName>
</protein>
<accession>A0LDT4</accession>
<reference key="1">
    <citation type="journal article" date="2009" name="Appl. Environ. Microbiol.">
        <title>Complete genome sequence of the chemolithoautotrophic marine magnetotactic coccus strain MC-1.</title>
        <authorList>
            <person name="Schubbe S."/>
            <person name="Williams T.J."/>
            <person name="Xie G."/>
            <person name="Kiss H.E."/>
            <person name="Brettin T.S."/>
            <person name="Martinez D."/>
            <person name="Ross C.A."/>
            <person name="Schuler D."/>
            <person name="Cox B.L."/>
            <person name="Nealson K.H."/>
            <person name="Bazylinski D.A."/>
        </authorList>
    </citation>
    <scope>NUCLEOTIDE SEQUENCE [LARGE SCALE GENOMIC DNA]</scope>
    <source>
        <strain>ATCC BAA-1437 / JCM 17883 / MC-1</strain>
    </source>
</reference>
<gene>
    <name evidence="1" type="primary">clpP</name>
    <name type="ordered locus">Mmc1_3642</name>
</gene>
<evidence type="ECO:0000255" key="1">
    <source>
        <dbReference type="HAMAP-Rule" id="MF_00444"/>
    </source>
</evidence>
<organism>
    <name type="scientific">Magnetococcus marinus (strain ATCC BAA-1437 / JCM 17883 / MC-1)</name>
    <dbReference type="NCBI Taxonomy" id="156889"/>
    <lineage>
        <taxon>Bacteria</taxon>
        <taxon>Pseudomonadati</taxon>
        <taxon>Pseudomonadota</taxon>
        <taxon>Alphaproteobacteria</taxon>
        <taxon>Magnetococcales</taxon>
        <taxon>Magnetococcaceae</taxon>
        <taxon>Magnetococcus</taxon>
    </lineage>
</organism>
<name>CLPP_MAGMM</name>
<keyword id="KW-0963">Cytoplasm</keyword>
<keyword id="KW-0378">Hydrolase</keyword>
<keyword id="KW-0645">Protease</keyword>
<keyword id="KW-1185">Reference proteome</keyword>
<keyword id="KW-0720">Serine protease</keyword>
<comment type="function">
    <text evidence="1">Cleaves peptides in various proteins in a process that requires ATP hydrolysis. Has a chymotrypsin-like activity. Plays a major role in the degradation of misfolded proteins.</text>
</comment>
<comment type="catalytic activity">
    <reaction evidence="1">
        <text>Hydrolysis of proteins to small peptides in the presence of ATP and magnesium. alpha-casein is the usual test substrate. In the absence of ATP, only oligopeptides shorter than five residues are hydrolyzed (such as succinyl-Leu-Tyr-|-NHMec, and Leu-Tyr-Leu-|-Tyr-Trp, in which cleavage of the -Tyr-|-Leu- and -Tyr-|-Trp bonds also occurs).</text>
        <dbReference type="EC" id="3.4.21.92"/>
    </reaction>
</comment>
<comment type="subunit">
    <text evidence="1">Fourteen ClpP subunits assemble into 2 heptameric rings which stack back to back to give a disk-like structure with a central cavity, resembling the structure of eukaryotic proteasomes.</text>
</comment>
<comment type="subcellular location">
    <subcellularLocation>
        <location evidence="1">Cytoplasm</location>
    </subcellularLocation>
</comment>
<comment type="similarity">
    <text evidence="1">Belongs to the peptidase S14 family.</text>
</comment>
<sequence length="202" mass="22281">MSLVPMVVETTNRGERAYDIYSRLLKERVVFLVGQVEEHMANLVVAQLLFLESENPEKDIHLYINSPGGSVTAGMAIYDTMQFIRPSVSTLCIGQAASMGAVLLAAGEAGKRLVLPNARVMIHQPLGGFSGQASDFEIHAREILRIRENLNQVLSHHTGKPLEQVQLDTERDNFLSATEAVEYGLVDKVISHRELPEAEAES</sequence>
<feature type="chain" id="PRO_1000135158" description="ATP-dependent Clp protease proteolytic subunit">
    <location>
        <begin position="1"/>
        <end position="202"/>
    </location>
</feature>
<feature type="active site" description="Nucleophile" evidence="1">
    <location>
        <position position="98"/>
    </location>
</feature>
<feature type="active site" evidence="1">
    <location>
        <position position="123"/>
    </location>
</feature>
<proteinExistence type="inferred from homology"/>